<keyword id="KW-0963">Cytoplasm</keyword>
<keyword id="KW-0378">Hydrolase</keyword>
<keyword id="KW-1185">Reference proteome</keyword>
<keyword id="KW-0694">RNA-binding</keyword>
<keyword id="KW-0820">tRNA-binding</keyword>
<dbReference type="EC" id="3.1.1.29" evidence="1"/>
<dbReference type="EMBL" id="AP006627">
    <property type="protein sequence ID" value="BAD62624.1"/>
    <property type="molecule type" value="Genomic_DNA"/>
</dbReference>
<dbReference type="RefSeq" id="WP_011244945.1">
    <property type="nucleotide sequence ID" value="NC_006582.1"/>
</dbReference>
<dbReference type="SMR" id="Q5WAD6"/>
<dbReference type="STRING" id="66692.ABC0081"/>
<dbReference type="KEGG" id="bcl:ABC0081"/>
<dbReference type="eggNOG" id="COG0193">
    <property type="taxonomic scope" value="Bacteria"/>
</dbReference>
<dbReference type="HOGENOM" id="CLU_062456_4_1_9"/>
<dbReference type="OrthoDB" id="9800507at2"/>
<dbReference type="Proteomes" id="UP000001168">
    <property type="component" value="Chromosome"/>
</dbReference>
<dbReference type="GO" id="GO:0005737">
    <property type="term" value="C:cytoplasm"/>
    <property type="evidence" value="ECO:0007669"/>
    <property type="project" value="UniProtKB-SubCell"/>
</dbReference>
<dbReference type="GO" id="GO:0004045">
    <property type="term" value="F:peptidyl-tRNA hydrolase activity"/>
    <property type="evidence" value="ECO:0007669"/>
    <property type="project" value="UniProtKB-UniRule"/>
</dbReference>
<dbReference type="GO" id="GO:0000049">
    <property type="term" value="F:tRNA binding"/>
    <property type="evidence" value="ECO:0007669"/>
    <property type="project" value="UniProtKB-UniRule"/>
</dbReference>
<dbReference type="GO" id="GO:0006515">
    <property type="term" value="P:protein quality control for misfolded or incompletely synthesized proteins"/>
    <property type="evidence" value="ECO:0007669"/>
    <property type="project" value="UniProtKB-UniRule"/>
</dbReference>
<dbReference type="GO" id="GO:0072344">
    <property type="term" value="P:rescue of stalled ribosome"/>
    <property type="evidence" value="ECO:0007669"/>
    <property type="project" value="UniProtKB-UniRule"/>
</dbReference>
<dbReference type="CDD" id="cd00462">
    <property type="entry name" value="PTH"/>
    <property type="match status" value="1"/>
</dbReference>
<dbReference type="FunFam" id="3.40.50.1470:FF:000001">
    <property type="entry name" value="Peptidyl-tRNA hydrolase"/>
    <property type="match status" value="1"/>
</dbReference>
<dbReference type="Gene3D" id="3.40.50.1470">
    <property type="entry name" value="Peptidyl-tRNA hydrolase"/>
    <property type="match status" value="1"/>
</dbReference>
<dbReference type="HAMAP" id="MF_00083">
    <property type="entry name" value="Pept_tRNA_hydro_bact"/>
    <property type="match status" value="1"/>
</dbReference>
<dbReference type="InterPro" id="IPR001328">
    <property type="entry name" value="Pept_tRNA_hydro"/>
</dbReference>
<dbReference type="InterPro" id="IPR018171">
    <property type="entry name" value="Pept_tRNA_hydro_CS"/>
</dbReference>
<dbReference type="InterPro" id="IPR036416">
    <property type="entry name" value="Pept_tRNA_hydro_sf"/>
</dbReference>
<dbReference type="NCBIfam" id="TIGR00447">
    <property type="entry name" value="pth"/>
    <property type="match status" value="1"/>
</dbReference>
<dbReference type="PANTHER" id="PTHR17224">
    <property type="entry name" value="PEPTIDYL-TRNA HYDROLASE"/>
    <property type="match status" value="1"/>
</dbReference>
<dbReference type="PANTHER" id="PTHR17224:SF1">
    <property type="entry name" value="PEPTIDYL-TRNA HYDROLASE"/>
    <property type="match status" value="1"/>
</dbReference>
<dbReference type="Pfam" id="PF01195">
    <property type="entry name" value="Pept_tRNA_hydro"/>
    <property type="match status" value="1"/>
</dbReference>
<dbReference type="SUPFAM" id="SSF53178">
    <property type="entry name" value="Peptidyl-tRNA hydrolase-like"/>
    <property type="match status" value="1"/>
</dbReference>
<dbReference type="PROSITE" id="PS01195">
    <property type="entry name" value="PEPT_TRNA_HYDROL_1"/>
    <property type="match status" value="1"/>
</dbReference>
<dbReference type="PROSITE" id="PS01196">
    <property type="entry name" value="PEPT_TRNA_HYDROL_2"/>
    <property type="match status" value="1"/>
</dbReference>
<name>PTH_SHOC1</name>
<accession>Q5WAD6</accession>
<sequence>MKLVVGLGNPGKKYEHTRHNIGFDIIDRCAQKLDLPLDKQKFKAIYGEKRIGSEKVVLLKPLTYMNLSGEAVRPFMDYFNISNDELVVIYDDLDLPVGKIRLRKKGSAGGHNGIKSLIAHLGTEDFNRIRVGIGRPAHGEPVVHYVLDTYRKEELAFMNEAAEKSAKAIEAWLEKPFLEVMNTFN</sequence>
<protein>
    <recommendedName>
        <fullName evidence="1">Peptidyl-tRNA hydrolase</fullName>
        <shortName evidence="1">Pth</shortName>
        <ecNumber evidence="1">3.1.1.29</ecNumber>
    </recommendedName>
</protein>
<evidence type="ECO:0000255" key="1">
    <source>
        <dbReference type="HAMAP-Rule" id="MF_00083"/>
    </source>
</evidence>
<gene>
    <name evidence="1" type="primary">pth</name>
    <name type="ordered locus">ABC0081</name>
</gene>
<comment type="function">
    <text evidence="1">Hydrolyzes ribosome-free peptidyl-tRNAs (with 1 or more amino acids incorporated), which drop off the ribosome during protein synthesis, or as a result of ribosome stalling.</text>
</comment>
<comment type="function">
    <text evidence="1">Catalyzes the release of premature peptidyl moieties from peptidyl-tRNA molecules trapped in stalled 50S ribosomal subunits, and thus maintains levels of free tRNAs and 50S ribosomes.</text>
</comment>
<comment type="catalytic activity">
    <reaction evidence="1">
        <text>an N-acyl-L-alpha-aminoacyl-tRNA + H2O = an N-acyl-L-amino acid + a tRNA + H(+)</text>
        <dbReference type="Rhea" id="RHEA:54448"/>
        <dbReference type="Rhea" id="RHEA-COMP:10123"/>
        <dbReference type="Rhea" id="RHEA-COMP:13883"/>
        <dbReference type="ChEBI" id="CHEBI:15377"/>
        <dbReference type="ChEBI" id="CHEBI:15378"/>
        <dbReference type="ChEBI" id="CHEBI:59874"/>
        <dbReference type="ChEBI" id="CHEBI:78442"/>
        <dbReference type="ChEBI" id="CHEBI:138191"/>
        <dbReference type="EC" id="3.1.1.29"/>
    </reaction>
</comment>
<comment type="subunit">
    <text evidence="1">Monomer.</text>
</comment>
<comment type="subcellular location">
    <subcellularLocation>
        <location evidence="1">Cytoplasm</location>
    </subcellularLocation>
</comment>
<comment type="similarity">
    <text evidence="1">Belongs to the PTH family.</text>
</comment>
<reference key="1">
    <citation type="submission" date="2003-10" db="EMBL/GenBank/DDBJ databases">
        <title>The complete genome sequence of the alkaliphilic Bacillus clausii KSM-K16.</title>
        <authorList>
            <person name="Takaki Y."/>
            <person name="Kageyama Y."/>
            <person name="Shimamura S."/>
            <person name="Suzuki H."/>
            <person name="Nishi S."/>
            <person name="Hatada Y."/>
            <person name="Kawai S."/>
            <person name="Ito S."/>
            <person name="Horikoshi K."/>
        </authorList>
    </citation>
    <scope>NUCLEOTIDE SEQUENCE [LARGE SCALE GENOMIC DNA]</scope>
    <source>
        <strain>KSM-K16</strain>
    </source>
</reference>
<organism>
    <name type="scientific">Shouchella clausii (strain KSM-K16)</name>
    <name type="common">Alkalihalobacillus clausii</name>
    <dbReference type="NCBI Taxonomy" id="66692"/>
    <lineage>
        <taxon>Bacteria</taxon>
        <taxon>Bacillati</taxon>
        <taxon>Bacillota</taxon>
        <taxon>Bacilli</taxon>
        <taxon>Bacillales</taxon>
        <taxon>Bacillaceae</taxon>
        <taxon>Shouchella</taxon>
    </lineage>
</organism>
<proteinExistence type="inferred from homology"/>
<feature type="chain" id="PRO_0000187691" description="Peptidyl-tRNA hydrolase">
    <location>
        <begin position="1"/>
        <end position="185"/>
    </location>
</feature>
<feature type="active site" description="Proton acceptor" evidence="1">
    <location>
        <position position="19"/>
    </location>
</feature>
<feature type="binding site" evidence="1">
    <location>
        <position position="14"/>
    </location>
    <ligand>
        <name>tRNA</name>
        <dbReference type="ChEBI" id="CHEBI:17843"/>
    </ligand>
</feature>
<feature type="binding site" evidence="1">
    <location>
        <position position="64"/>
    </location>
    <ligand>
        <name>tRNA</name>
        <dbReference type="ChEBI" id="CHEBI:17843"/>
    </ligand>
</feature>
<feature type="binding site" evidence="1">
    <location>
        <position position="66"/>
    </location>
    <ligand>
        <name>tRNA</name>
        <dbReference type="ChEBI" id="CHEBI:17843"/>
    </ligand>
</feature>
<feature type="binding site" evidence="1">
    <location>
        <position position="112"/>
    </location>
    <ligand>
        <name>tRNA</name>
        <dbReference type="ChEBI" id="CHEBI:17843"/>
    </ligand>
</feature>
<feature type="site" description="Discriminates between blocked and unblocked aminoacyl-tRNA" evidence="1">
    <location>
        <position position="9"/>
    </location>
</feature>
<feature type="site" description="Stabilizes the basic form of H active site to accept a proton" evidence="1">
    <location>
        <position position="91"/>
    </location>
</feature>